<reference key="1">
    <citation type="journal article" date="1992" name="Mol. Microbiol.">
        <title>Subtelomeric expression regions of Borrelia hermsii linear plasmids are highly polymorphic.</title>
        <authorList>
            <person name="Restrepo B.I."/>
            <person name="Kitten T."/>
            <person name="Carter C.J."/>
            <person name="Infante D."/>
            <person name="Barbour A.G."/>
        </authorList>
    </citation>
    <scope>NUCLEOTIDE SEQUENCE [GENOMIC DNA]</scope>
    <source>
        <strain>ATCC 35209 / HS1</strain>
    </source>
</reference>
<reference key="2">
    <citation type="journal article" date="1998" name="Infect. Immun.">
        <title>Population structure of the relapsing fever spirochete Borrelia hermsii as indicated by polymorphism of two multigene families that encode immunogenic outer surface lipoproteins.</title>
        <authorList>
            <person name="Hinnebusch B.J."/>
            <person name="Barbour A.G."/>
            <person name="Restrepo B.I."/>
            <person name="Schwan T.G."/>
        </authorList>
    </citation>
    <scope>NOMENCLATURE</scope>
</reference>
<keyword id="KW-0998">Cell outer membrane</keyword>
<keyword id="KW-0449">Lipoprotein</keyword>
<keyword id="KW-0472">Membrane</keyword>
<keyword id="KW-0564">Palmitate</keyword>
<keyword id="KW-0614">Plasmid</keyword>
<keyword id="KW-0732">Signal</keyword>
<accession>P32778</accession>
<protein>
    <recommendedName>
        <fullName evidence="4">Variable small protein 24</fullName>
    </recommendedName>
    <alternativeName>
        <fullName>Variable major outer membrane lipoprotein 24</fullName>
    </alternativeName>
</protein>
<evidence type="ECO:0000250" key="1">
    <source>
        <dbReference type="UniProtKB" id="P21875"/>
    </source>
</evidence>
<evidence type="ECO:0000256" key="2">
    <source>
        <dbReference type="SAM" id="MobiDB-lite"/>
    </source>
</evidence>
<evidence type="ECO:0000303" key="3">
    <source>
    </source>
</evidence>
<evidence type="ECO:0000303" key="4">
    <source>
    </source>
</evidence>
<evidence type="ECO:0000305" key="5"/>
<evidence type="ECO:0000305" key="6">
    <source>
    </source>
</evidence>
<proteinExistence type="inferred from homology"/>
<name>VSP24_BORHE</name>
<comment type="function">
    <text evidence="1">The Vlp and Vsp proteins are antigenically distinct proteins, only one vlp or vsp gene is transcriptionally active at any one time. Switching between these genes is a mechanism of host immune response evasion.</text>
</comment>
<comment type="subcellular location">
    <subcellularLocation>
        <location evidence="1">Cell outer membrane</location>
        <topology>Lipid-anchor</topology>
    </subcellularLocation>
</comment>
<comment type="miscellaneous">
    <text evidence="6">Genes for both Vlp and Vsp families are on (usually) unnamed linear plasmids in B.hermsii HS1.</text>
</comment>
<comment type="similarity">
    <text evidence="5">Belongs to the variable small protein (Vsp) family.</text>
</comment>
<organism>
    <name type="scientific">Borrelia hermsii</name>
    <dbReference type="NCBI Taxonomy" id="140"/>
    <lineage>
        <taxon>Bacteria</taxon>
        <taxon>Pseudomonadati</taxon>
        <taxon>Spirochaetota</taxon>
        <taxon>Spirochaetia</taxon>
        <taxon>Spirochaetales</taxon>
        <taxon>Borreliaceae</taxon>
        <taxon>Borrelia</taxon>
    </lineage>
</organism>
<dbReference type="EMBL" id="L04786">
    <property type="protein sequence ID" value="AAA22964.1"/>
    <property type="molecule type" value="Genomic_DNA"/>
</dbReference>
<dbReference type="PIR" id="I40303">
    <property type="entry name" value="I40303"/>
</dbReference>
<dbReference type="RefSeq" id="WP_015633340.1">
    <property type="nucleotide sequence ID" value="NZ_CP161009.1"/>
</dbReference>
<dbReference type="SMR" id="P32778"/>
<dbReference type="OrthoDB" id="352157at2"/>
<dbReference type="GO" id="GO:0009279">
    <property type="term" value="C:cell outer membrane"/>
    <property type="evidence" value="ECO:0007669"/>
    <property type="project" value="UniProtKB-SubCell"/>
</dbReference>
<dbReference type="Gene3D" id="1.20.120.240">
    <property type="entry name" value="Lipoprotein, type 6"/>
    <property type="match status" value="1"/>
</dbReference>
<dbReference type="InterPro" id="IPR001800">
    <property type="entry name" value="Lipoprotein_OspC"/>
</dbReference>
<dbReference type="InterPro" id="IPR036437">
    <property type="entry name" value="OspC-like_sf"/>
</dbReference>
<dbReference type="Pfam" id="PF01441">
    <property type="entry name" value="Lipoprotein_6"/>
    <property type="match status" value="1"/>
</dbReference>
<dbReference type="SUPFAM" id="SSF63515">
    <property type="entry name" value="Outer surface protein C (OspC)"/>
    <property type="match status" value="1"/>
</dbReference>
<dbReference type="PROSITE" id="PS51257">
    <property type="entry name" value="PROKAR_LIPOPROTEIN"/>
    <property type="match status" value="1"/>
</dbReference>
<geneLocation type="plasmid" evidence="3"/>
<feature type="signal peptide" evidence="5">
    <location>
        <begin position="1"/>
        <end position="18"/>
    </location>
</feature>
<feature type="chain" id="PRO_0000018090" description="Variable small protein 24">
    <location>
        <begin position="19"/>
        <end position="214"/>
    </location>
</feature>
<feature type="region of interest" description="Disordered" evidence="2">
    <location>
        <begin position="146"/>
        <end position="172"/>
    </location>
</feature>
<feature type="lipid moiety-binding region" description="N-palmitoyl cysteine" evidence="5">
    <location>
        <position position="19"/>
    </location>
</feature>
<feature type="lipid moiety-binding region" description="S-diacylglycerol cysteine" evidence="5">
    <location>
        <position position="19"/>
    </location>
</feature>
<gene>
    <name evidence="4" type="primary">vsp24</name>
    <name evidence="3" type="synonym">vmp24</name>
</gene>
<sequence>MRKRISAIIMTLFMVFMSCNNGGPELKSDEVAKSDGTVLDLAKVSKKIKEASAFAASVKEVETLVKSVDELAKAIGKKIKNDGGLDTEAGQNGSLIAGVHSVVSAVKIKVGALETTSGISNELKTKITEVKSKAEAFLNKLKDGHTELGKKDASDDDTKKAIKKDNSDKTKGASELEALNTAVDALLKAAEGEVEAAIKELTAPVKAEKPSQNN</sequence>